<protein>
    <recommendedName>
        <fullName evidence="1">33 kDa chaperonin</fullName>
    </recommendedName>
    <alternativeName>
        <fullName evidence="1">Heat shock protein 33 homolog</fullName>
        <shortName evidence="1">HSP33</shortName>
    </alternativeName>
</protein>
<comment type="function">
    <text evidence="1">Redox regulated molecular chaperone. Protects both thermally unfolding and oxidatively damaged proteins from irreversible aggregation. Plays an important role in the bacterial defense system toward oxidative stress.</text>
</comment>
<comment type="subcellular location">
    <subcellularLocation>
        <location evidence="1">Cytoplasm</location>
    </subcellularLocation>
</comment>
<comment type="PTM">
    <text evidence="1">Under oxidizing conditions two disulfide bonds are formed involving the reactive cysteines. Under reducing conditions zinc is bound to the reactive cysteines and the protein is inactive.</text>
</comment>
<comment type="similarity">
    <text evidence="1">Belongs to the HSP33 family.</text>
</comment>
<proteinExistence type="inferred from homology"/>
<accession>A3DAB1</accession>
<organism>
    <name type="scientific">Shewanella baltica (strain OS155 / ATCC BAA-1091)</name>
    <dbReference type="NCBI Taxonomy" id="325240"/>
    <lineage>
        <taxon>Bacteria</taxon>
        <taxon>Pseudomonadati</taxon>
        <taxon>Pseudomonadota</taxon>
        <taxon>Gammaproteobacteria</taxon>
        <taxon>Alteromonadales</taxon>
        <taxon>Shewanellaceae</taxon>
        <taxon>Shewanella</taxon>
    </lineage>
</organism>
<sequence>MNQDTLHRYLFDNADVRGELVQLQDSYQQVISAQEYPAVLQVLLGELMAATSLLTATLKFSGDISVQLQGNGPVSLAVINGNNLQELRGVARWNAELADDASLTDLFGQGYMVITLTPDEGERYQGVVALDKPTLAACVEEYFNQSEQLPTGIWLFADGKQAAGMFLQILPSKEDHNPDFEHLSQLTSTIKAEELFTLDAESVLHRLYHQEEVRLFDPIDVSFKCTCSHERSAGAIKTLDQAEIEAILAEDGKIEMGCEYCHAKYIFDAIDVAALFANGQTSTTQQ</sequence>
<dbReference type="EMBL" id="CP000563">
    <property type="protein sequence ID" value="ABN63674.1"/>
    <property type="molecule type" value="Genomic_DNA"/>
</dbReference>
<dbReference type="RefSeq" id="WP_006084926.1">
    <property type="nucleotide sequence ID" value="NC_009052.1"/>
</dbReference>
<dbReference type="SMR" id="A3DAB1"/>
<dbReference type="STRING" id="325240.Sbal_4209"/>
<dbReference type="GeneID" id="11770510"/>
<dbReference type="KEGG" id="sbl:Sbal_4209"/>
<dbReference type="HOGENOM" id="CLU_054493_0_0_6"/>
<dbReference type="OrthoDB" id="9793753at2"/>
<dbReference type="Proteomes" id="UP000001557">
    <property type="component" value="Chromosome"/>
</dbReference>
<dbReference type="GO" id="GO:0005737">
    <property type="term" value="C:cytoplasm"/>
    <property type="evidence" value="ECO:0007669"/>
    <property type="project" value="UniProtKB-SubCell"/>
</dbReference>
<dbReference type="GO" id="GO:0044183">
    <property type="term" value="F:protein folding chaperone"/>
    <property type="evidence" value="ECO:0007669"/>
    <property type="project" value="TreeGrafter"/>
</dbReference>
<dbReference type="GO" id="GO:0051082">
    <property type="term" value="F:unfolded protein binding"/>
    <property type="evidence" value="ECO:0007669"/>
    <property type="project" value="UniProtKB-UniRule"/>
</dbReference>
<dbReference type="GO" id="GO:0042026">
    <property type="term" value="P:protein refolding"/>
    <property type="evidence" value="ECO:0007669"/>
    <property type="project" value="TreeGrafter"/>
</dbReference>
<dbReference type="CDD" id="cd00498">
    <property type="entry name" value="Hsp33"/>
    <property type="match status" value="1"/>
</dbReference>
<dbReference type="Gene3D" id="1.10.287.480">
    <property type="entry name" value="helix hairpin bin"/>
    <property type="match status" value="1"/>
</dbReference>
<dbReference type="Gene3D" id="3.55.30.10">
    <property type="entry name" value="Hsp33 domain"/>
    <property type="match status" value="1"/>
</dbReference>
<dbReference type="Gene3D" id="3.90.1280.10">
    <property type="entry name" value="HSP33 redox switch-like"/>
    <property type="match status" value="1"/>
</dbReference>
<dbReference type="HAMAP" id="MF_00117">
    <property type="entry name" value="HslO"/>
    <property type="match status" value="1"/>
</dbReference>
<dbReference type="InterPro" id="IPR000397">
    <property type="entry name" value="Heat_shock_Hsp33"/>
</dbReference>
<dbReference type="InterPro" id="IPR016154">
    <property type="entry name" value="Heat_shock_Hsp33_C"/>
</dbReference>
<dbReference type="InterPro" id="IPR016153">
    <property type="entry name" value="Heat_shock_Hsp33_N"/>
</dbReference>
<dbReference type="InterPro" id="IPR023212">
    <property type="entry name" value="Hsp33_helix_hairpin_bin_dom_sf"/>
</dbReference>
<dbReference type="NCBIfam" id="NF001033">
    <property type="entry name" value="PRK00114.1"/>
    <property type="match status" value="1"/>
</dbReference>
<dbReference type="PANTHER" id="PTHR30111">
    <property type="entry name" value="33 KDA CHAPERONIN"/>
    <property type="match status" value="1"/>
</dbReference>
<dbReference type="PANTHER" id="PTHR30111:SF1">
    <property type="entry name" value="33 KDA CHAPERONIN"/>
    <property type="match status" value="1"/>
</dbReference>
<dbReference type="Pfam" id="PF01430">
    <property type="entry name" value="HSP33"/>
    <property type="match status" value="1"/>
</dbReference>
<dbReference type="PIRSF" id="PIRSF005261">
    <property type="entry name" value="Heat_shock_Hsp33"/>
    <property type="match status" value="1"/>
</dbReference>
<dbReference type="SUPFAM" id="SSF64397">
    <property type="entry name" value="Hsp33 domain"/>
    <property type="match status" value="1"/>
</dbReference>
<dbReference type="SUPFAM" id="SSF118352">
    <property type="entry name" value="HSP33 redox switch-like"/>
    <property type="match status" value="1"/>
</dbReference>
<feature type="chain" id="PRO_1000015563" description="33 kDa chaperonin">
    <location>
        <begin position="1"/>
        <end position="286"/>
    </location>
</feature>
<feature type="disulfide bond" description="Redox-active" evidence="1">
    <location>
        <begin position="225"/>
        <end position="227"/>
    </location>
</feature>
<feature type="disulfide bond" description="Redox-active" evidence="1">
    <location>
        <begin position="258"/>
        <end position="261"/>
    </location>
</feature>
<evidence type="ECO:0000255" key="1">
    <source>
        <dbReference type="HAMAP-Rule" id="MF_00117"/>
    </source>
</evidence>
<reference key="1">
    <citation type="submission" date="2007-02" db="EMBL/GenBank/DDBJ databases">
        <title>Complete sequence of chromosome of Shewanella baltica OS155.</title>
        <authorList>
            <consortium name="US DOE Joint Genome Institute"/>
            <person name="Copeland A."/>
            <person name="Lucas S."/>
            <person name="Lapidus A."/>
            <person name="Barry K."/>
            <person name="Detter J.C."/>
            <person name="Glavina del Rio T."/>
            <person name="Hammon N."/>
            <person name="Israni S."/>
            <person name="Dalin E."/>
            <person name="Tice H."/>
            <person name="Pitluck S."/>
            <person name="Sims D.R."/>
            <person name="Brettin T."/>
            <person name="Bruce D."/>
            <person name="Han C."/>
            <person name="Tapia R."/>
            <person name="Brainard J."/>
            <person name="Schmutz J."/>
            <person name="Larimer F."/>
            <person name="Land M."/>
            <person name="Hauser L."/>
            <person name="Kyrpides N."/>
            <person name="Mikhailova N."/>
            <person name="Brettar I."/>
            <person name="Klappenbach J."/>
            <person name="Konstantinidis K."/>
            <person name="Rodrigues J."/>
            <person name="Tiedje J."/>
            <person name="Richardson P."/>
        </authorList>
    </citation>
    <scope>NUCLEOTIDE SEQUENCE [LARGE SCALE GENOMIC DNA]</scope>
    <source>
        <strain>OS155 / ATCC BAA-1091</strain>
    </source>
</reference>
<name>HSLO_SHEB5</name>
<gene>
    <name evidence="1" type="primary">hslO</name>
    <name type="ordered locus">Sbal_4209</name>
</gene>
<keyword id="KW-0143">Chaperone</keyword>
<keyword id="KW-0963">Cytoplasm</keyword>
<keyword id="KW-1015">Disulfide bond</keyword>
<keyword id="KW-0676">Redox-active center</keyword>
<keyword id="KW-1185">Reference proteome</keyword>
<keyword id="KW-0862">Zinc</keyword>